<organism>
    <name type="scientific">Psychrobacter cryohalolentis (strain ATCC BAA-1226 / DSM 17306 / VKM B-2378 / K5)</name>
    <dbReference type="NCBI Taxonomy" id="335284"/>
    <lineage>
        <taxon>Bacteria</taxon>
        <taxon>Pseudomonadati</taxon>
        <taxon>Pseudomonadota</taxon>
        <taxon>Gammaproteobacteria</taxon>
        <taxon>Moraxellales</taxon>
        <taxon>Moraxellaceae</taxon>
        <taxon>Psychrobacter</taxon>
    </lineage>
</organism>
<evidence type="ECO:0000255" key="1">
    <source>
        <dbReference type="HAMAP-Rule" id="MF_01456"/>
    </source>
</evidence>
<name>NUOK_PSYCK</name>
<protein>
    <recommendedName>
        <fullName evidence="1">NADH-quinone oxidoreductase subunit K</fullName>
        <ecNumber evidence="1">7.1.1.-</ecNumber>
    </recommendedName>
    <alternativeName>
        <fullName evidence="1">NADH dehydrogenase I subunit K</fullName>
    </alternativeName>
    <alternativeName>
        <fullName evidence="1">NDH-1 subunit K</fullName>
    </alternativeName>
</protein>
<accession>Q1QD88</accession>
<reference key="1">
    <citation type="submission" date="2006-03" db="EMBL/GenBank/DDBJ databases">
        <title>Complete sequence of chromosome of Psychrobacter cryohalolentis K5.</title>
        <authorList>
            <consortium name="US DOE Joint Genome Institute"/>
            <person name="Copeland A."/>
            <person name="Lucas S."/>
            <person name="Lapidus A."/>
            <person name="Barry K."/>
            <person name="Detter J.C."/>
            <person name="Glavina T."/>
            <person name="Hammon N."/>
            <person name="Israni S."/>
            <person name="Dalin E."/>
            <person name="Tice H."/>
            <person name="Pitluck S."/>
            <person name="Brettin T."/>
            <person name="Bruce D."/>
            <person name="Han C."/>
            <person name="Tapia R."/>
            <person name="Sims D.R."/>
            <person name="Gilna P."/>
            <person name="Schmutz J."/>
            <person name="Larimer F."/>
            <person name="Land M."/>
            <person name="Hauser L."/>
            <person name="Kyrpides N."/>
            <person name="Kim E."/>
            <person name="Richardson P."/>
        </authorList>
    </citation>
    <scope>NUCLEOTIDE SEQUENCE [LARGE SCALE GENOMIC DNA]</scope>
    <source>
        <strain>ATCC BAA-1226 / DSM 17306 / VKM B-2378 / K5</strain>
    </source>
</reference>
<sequence>MVLAASVVQEVANVPFAHEVAGLVQPVAEAQNVLGLIPMSHGLILAGILFAIGLCGVMVRRNFLFMLMSLEIMMNAAALAFVVAGSRWVDPDGQIMFIFILTLAAAEAAIGLAILLRFYHQRGHLDVDSANEMKG</sequence>
<comment type="function">
    <text evidence="1">NDH-1 shuttles electrons from NADH, via FMN and iron-sulfur (Fe-S) centers, to quinones in the respiratory chain. The immediate electron acceptor for the enzyme in this species is believed to be ubiquinone. Couples the redox reaction to proton translocation (for every two electrons transferred, four hydrogen ions are translocated across the cytoplasmic membrane), and thus conserves the redox energy in a proton gradient.</text>
</comment>
<comment type="catalytic activity">
    <reaction evidence="1">
        <text>a quinone + NADH + 5 H(+)(in) = a quinol + NAD(+) + 4 H(+)(out)</text>
        <dbReference type="Rhea" id="RHEA:57888"/>
        <dbReference type="ChEBI" id="CHEBI:15378"/>
        <dbReference type="ChEBI" id="CHEBI:24646"/>
        <dbReference type="ChEBI" id="CHEBI:57540"/>
        <dbReference type="ChEBI" id="CHEBI:57945"/>
        <dbReference type="ChEBI" id="CHEBI:132124"/>
    </reaction>
</comment>
<comment type="subunit">
    <text evidence="1">NDH-1 is composed of 14 different subunits. Subunits NuoA, H, J, K, L, M, N constitute the membrane sector of the complex.</text>
</comment>
<comment type="subcellular location">
    <subcellularLocation>
        <location evidence="1">Cell inner membrane</location>
        <topology evidence="1">Multi-pass membrane protein</topology>
    </subcellularLocation>
</comment>
<comment type="similarity">
    <text evidence="1">Belongs to the complex I subunit 4L family.</text>
</comment>
<proteinExistence type="inferred from homology"/>
<keyword id="KW-0997">Cell inner membrane</keyword>
<keyword id="KW-1003">Cell membrane</keyword>
<keyword id="KW-0472">Membrane</keyword>
<keyword id="KW-0520">NAD</keyword>
<keyword id="KW-0874">Quinone</keyword>
<keyword id="KW-1278">Translocase</keyword>
<keyword id="KW-0812">Transmembrane</keyword>
<keyword id="KW-1133">Transmembrane helix</keyword>
<keyword id="KW-0813">Transport</keyword>
<keyword id="KW-0830">Ubiquinone</keyword>
<dbReference type="EC" id="7.1.1.-" evidence="1"/>
<dbReference type="EMBL" id="CP000323">
    <property type="protein sequence ID" value="ABE74365.1"/>
    <property type="molecule type" value="Genomic_DNA"/>
</dbReference>
<dbReference type="SMR" id="Q1QD88"/>
<dbReference type="STRING" id="335284.Pcryo_0582"/>
<dbReference type="KEGG" id="pcr:Pcryo_0582"/>
<dbReference type="eggNOG" id="COG0713">
    <property type="taxonomic scope" value="Bacteria"/>
</dbReference>
<dbReference type="HOGENOM" id="CLU_144724_0_1_6"/>
<dbReference type="Proteomes" id="UP000002425">
    <property type="component" value="Chromosome"/>
</dbReference>
<dbReference type="GO" id="GO:0030964">
    <property type="term" value="C:NADH dehydrogenase complex"/>
    <property type="evidence" value="ECO:0007669"/>
    <property type="project" value="TreeGrafter"/>
</dbReference>
<dbReference type="GO" id="GO:0005886">
    <property type="term" value="C:plasma membrane"/>
    <property type="evidence" value="ECO:0007669"/>
    <property type="project" value="UniProtKB-SubCell"/>
</dbReference>
<dbReference type="GO" id="GO:0050136">
    <property type="term" value="F:NADH:ubiquinone reductase (non-electrogenic) activity"/>
    <property type="evidence" value="ECO:0007669"/>
    <property type="project" value="UniProtKB-UniRule"/>
</dbReference>
<dbReference type="GO" id="GO:0048038">
    <property type="term" value="F:quinone binding"/>
    <property type="evidence" value="ECO:0007669"/>
    <property type="project" value="UniProtKB-KW"/>
</dbReference>
<dbReference type="GO" id="GO:0042773">
    <property type="term" value="P:ATP synthesis coupled electron transport"/>
    <property type="evidence" value="ECO:0007669"/>
    <property type="project" value="InterPro"/>
</dbReference>
<dbReference type="FunFam" id="1.10.287.3510:FF:000001">
    <property type="entry name" value="NADH-quinone oxidoreductase subunit K"/>
    <property type="match status" value="1"/>
</dbReference>
<dbReference type="Gene3D" id="1.10.287.3510">
    <property type="match status" value="1"/>
</dbReference>
<dbReference type="HAMAP" id="MF_01456">
    <property type="entry name" value="NDH1_NuoK"/>
    <property type="match status" value="1"/>
</dbReference>
<dbReference type="InterPro" id="IPR001133">
    <property type="entry name" value="NADH_UbQ_OxRdtase_chain4L/K"/>
</dbReference>
<dbReference type="InterPro" id="IPR039428">
    <property type="entry name" value="NUOK/Mnh_C1-like"/>
</dbReference>
<dbReference type="NCBIfam" id="NF004319">
    <property type="entry name" value="PRK05715.1-1"/>
    <property type="match status" value="1"/>
</dbReference>
<dbReference type="NCBIfam" id="NF004320">
    <property type="entry name" value="PRK05715.1-2"/>
    <property type="match status" value="1"/>
</dbReference>
<dbReference type="PANTHER" id="PTHR11434:SF16">
    <property type="entry name" value="NADH-UBIQUINONE OXIDOREDUCTASE CHAIN 4L"/>
    <property type="match status" value="1"/>
</dbReference>
<dbReference type="PANTHER" id="PTHR11434">
    <property type="entry name" value="NADH-UBIQUINONE OXIDOREDUCTASE SUBUNIT ND4L"/>
    <property type="match status" value="1"/>
</dbReference>
<dbReference type="Pfam" id="PF00420">
    <property type="entry name" value="Oxidored_q2"/>
    <property type="match status" value="1"/>
</dbReference>
<feature type="chain" id="PRO_0000390179" description="NADH-quinone oxidoreductase subunit K">
    <location>
        <begin position="1"/>
        <end position="135"/>
    </location>
</feature>
<feature type="transmembrane region" description="Helical" evidence="1">
    <location>
        <begin position="33"/>
        <end position="53"/>
    </location>
</feature>
<feature type="transmembrane region" description="Helical" evidence="1">
    <location>
        <begin position="63"/>
        <end position="83"/>
    </location>
</feature>
<feature type="transmembrane region" description="Helical" evidence="1">
    <location>
        <begin position="95"/>
        <end position="115"/>
    </location>
</feature>
<gene>
    <name evidence="1" type="primary">nuoK</name>
    <name type="ordered locus">Pcryo_0582</name>
</gene>